<sequence>DKNKKPIWMAGFPGFTPIR</sequence>
<evidence type="ECO:0000269" key="1">
    <source>
    </source>
</evidence>
<evidence type="ECO:0000303" key="2">
    <source>
    </source>
</evidence>
<evidence type="ECO:0000305" key="3"/>
<evidence type="ECO:0000305" key="4">
    <source>
    </source>
</evidence>
<protein>
    <recommendedName>
        <fullName evidence="3">Protopolybiakinin-2</fullName>
    </recommendedName>
    <alternativeName>
        <fullName evidence="2">Bradykinin-related peptide</fullName>
    </alternativeName>
    <alternativeName>
        <fullName evidence="2">Protopolybiakinin-II</fullName>
    </alternativeName>
</protein>
<feature type="peptide" id="PRO_0000424403" description="Protopolybiakinin-2" evidence="1">
    <location>
        <begin position="1"/>
        <end position="19"/>
    </location>
</feature>
<dbReference type="GO" id="GO:0005576">
    <property type="term" value="C:extracellular region"/>
    <property type="evidence" value="ECO:0007669"/>
    <property type="project" value="UniProtKB-SubCell"/>
</dbReference>
<dbReference type="GO" id="GO:0090729">
    <property type="term" value="F:toxin activity"/>
    <property type="evidence" value="ECO:0007669"/>
    <property type="project" value="UniProtKB-KW"/>
</dbReference>
<proteinExistence type="evidence at protein level"/>
<keyword id="KW-0903">Direct protein sequencing</keyword>
<keyword id="KW-0467">Mast cell degranulation</keyword>
<keyword id="KW-0964">Secreted</keyword>
<keyword id="KW-0800">Toxin</keyword>
<organism>
    <name type="scientific">Protopolybia exigua</name>
    <name type="common">Neotropical social wasp</name>
    <dbReference type="NCBI Taxonomy" id="91439"/>
    <lineage>
        <taxon>Eukaryota</taxon>
        <taxon>Metazoa</taxon>
        <taxon>Ecdysozoa</taxon>
        <taxon>Arthropoda</taxon>
        <taxon>Hexapoda</taxon>
        <taxon>Insecta</taxon>
        <taxon>Pterygota</taxon>
        <taxon>Neoptera</taxon>
        <taxon>Endopterygota</taxon>
        <taxon>Hymenoptera</taxon>
        <taxon>Apocrita</taxon>
        <taxon>Aculeata</taxon>
        <taxon>Vespoidea</taxon>
        <taxon>Vespidae</taxon>
        <taxon>Polistinae</taxon>
        <taxon>Epiponini</taxon>
        <taxon>Protopolybia</taxon>
    </lineage>
</organism>
<name>BRK2_PROEX</name>
<comment type="function">
    <text evidence="1">Shows a high potency in mast cell degranulation (is 10-fold more potent than bradykinin).</text>
</comment>
<comment type="subcellular location">
    <subcellularLocation>
        <location evidence="1">Secreted</location>
    </subcellularLocation>
</comment>
<comment type="tissue specificity">
    <text evidence="4">Expressed by the venom gland.</text>
</comment>
<comment type="mass spectrometry"/>
<comment type="toxic dose">
    <text evidence="1">Dose that causes degranulation of mast cells (ED(50)) is 10 uM.</text>
</comment>
<comment type="miscellaneous">
    <text evidence="4">Negative results: does not provoke rat ileum muscle constriction and does not show algesic effects.</text>
</comment>
<comment type="similarity">
    <text evidence="3">Belongs to the bradykinin-related peptide family.</text>
</comment>
<accession>P0DM71</accession>
<reference key="1">
    <citation type="journal article" date="2006" name="Peptides">
        <title>Two new bradykinin-related peptides from the venom of the social wasp Protopolybia exigua (Saussure).</title>
        <authorList>
            <person name="Mendes M.A."/>
            <person name="Palma M.S."/>
        </authorList>
    </citation>
    <scope>PROTEIN SEQUENCE</scope>
    <scope>SYNTHESIS</scope>
    <scope>FUNCTION</scope>
    <scope>TOXIC DOSE</scope>
    <scope>MASS SPECTROMETRY</scope>
    <scope>SUBCELLULAR LOCATION</scope>
    <source>
        <tissue>Venom</tissue>
    </source>
</reference>